<name>ACP7_HUMAN</name>
<organism>
    <name type="scientific">Homo sapiens</name>
    <name type="common">Human</name>
    <dbReference type="NCBI Taxonomy" id="9606"/>
    <lineage>
        <taxon>Eukaryota</taxon>
        <taxon>Metazoa</taxon>
        <taxon>Chordata</taxon>
        <taxon>Craniata</taxon>
        <taxon>Vertebrata</taxon>
        <taxon>Euteleostomi</taxon>
        <taxon>Mammalia</taxon>
        <taxon>Eutheria</taxon>
        <taxon>Euarchontoglires</taxon>
        <taxon>Primates</taxon>
        <taxon>Haplorrhini</taxon>
        <taxon>Catarrhini</taxon>
        <taxon>Hominidae</taxon>
        <taxon>Homo</taxon>
    </lineage>
</organism>
<gene>
    <name evidence="5" type="primary">ACP7</name>
    <name evidence="3" type="synonym">PAPL</name>
    <name evidence="3" type="synonym">PAPL1</name>
</gene>
<proteinExistence type="evidence at protein level"/>
<protein>
    <recommendedName>
        <fullName evidence="4">Acid phosphatase type 7</fullName>
        <ecNumber>3.1.3.2</ecNumber>
    </recommendedName>
    <alternativeName>
        <fullName evidence="3">Purple acid phosphatase long form</fullName>
    </alternativeName>
</protein>
<evidence type="ECO:0000250" key="1"/>
<evidence type="ECO:0000255" key="2"/>
<evidence type="ECO:0000303" key="3">
    <source>
    </source>
</evidence>
<evidence type="ECO:0000305" key="4"/>
<evidence type="ECO:0000312" key="5">
    <source>
        <dbReference type="HGNC" id="HGNC:33781"/>
    </source>
</evidence>
<accession>Q6ZNF0</accession>
<accession>B2RN68</accession>
<reference key="1">
    <citation type="journal article" date="2004" name="Nat. Genet.">
        <title>Complete sequencing and characterization of 21,243 full-length human cDNAs.</title>
        <authorList>
            <person name="Ota T."/>
            <person name="Suzuki Y."/>
            <person name="Nishikawa T."/>
            <person name="Otsuki T."/>
            <person name="Sugiyama T."/>
            <person name="Irie R."/>
            <person name="Wakamatsu A."/>
            <person name="Hayashi K."/>
            <person name="Sato H."/>
            <person name="Nagai K."/>
            <person name="Kimura K."/>
            <person name="Makita H."/>
            <person name="Sekine M."/>
            <person name="Obayashi M."/>
            <person name="Nishi T."/>
            <person name="Shibahara T."/>
            <person name="Tanaka T."/>
            <person name="Ishii S."/>
            <person name="Yamamoto J."/>
            <person name="Saito K."/>
            <person name="Kawai Y."/>
            <person name="Isono Y."/>
            <person name="Nakamura Y."/>
            <person name="Nagahari K."/>
            <person name="Murakami K."/>
            <person name="Yasuda T."/>
            <person name="Iwayanagi T."/>
            <person name="Wagatsuma M."/>
            <person name="Shiratori A."/>
            <person name="Sudo H."/>
            <person name="Hosoiri T."/>
            <person name="Kaku Y."/>
            <person name="Kodaira H."/>
            <person name="Kondo H."/>
            <person name="Sugawara M."/>
            <person name="Takahashi M."/>
            <person name="Kanda K."/>
            <person name="Yokoi T."/>
            <person name="Furuya T."/>
            <person name="Kikkawa E."/>
            <person name="Omura Y."/>
            <person name="Abe K."/>
            <person name="Kamihara K."/>
            <person name="Katsuta N."/>
            <person name="Sato K."/>
            <person name="Tanikawa M."/>
            <person name="Yamazaki M."/>
            <person name="Ninomiya K."/>
            <person name="Ishibashi T."/>
            <person name="Yamashita H."/>
            <person name="Murakawa K."/>
            <person name="Fujimori K."/>
            <person name="Tanai H."/>
            <person name="Kimata M."/>
            <person name="Watanabe M."/>
            <person name="Hiraoka S."/>
            <person name="Chiba Y."/>
            <person name="Ishida S."/>
            <person name="Ono Y."/>
            <person name="Takiguchi S."/>
            <person name="Watanabe S."/>
            <person name="Yosida M."/>
            <person name="Hotuta T."/>
            <person name="Kusano J."/>
            <person name="Kanehori K."/>
            <person name="Takahashi-Fujii A."/>
            <person name="Hara H."/>
            <person name="Tanase T.-O."/>
            <person name="Nomura Y."/>
            <person name="Togiya S."/>
            <person name="Komai F."/>
            <person name="Hara R."/>
            <person name="Takeuchi K."/>
            <person name="Arita M."/>
            <person name="Imose N."/>
            <person name="Musashino K."/>
            <person name="Yuuki H."/>
            <person name="Oshima A."/>
            <person name="Sasaki N."/>
            <person name="Aotsuka S."/>
            <person name="Yoshikawa Y."/>
            <person name="Matsunawa H."/>
            <person name="Ichihara T."/>
            <person name="Shiohata N."/>
            <person name="Sano S."/>
            <person name="Moriya S."/>
            <person name="Momiyama H."/>
            <person name="Satoh N."/>
            <person name="Takami S."/>
            <person name="Terashima Y."/>
            <person name="Suzuki O."/>
            <person name="Nakagawa S."/>
            <person name="Senoh A."/>
            <person name="Mizoguchi H."/>
            <person name="Goto Y."/>
            <person name="Shimizu F."/>
            <person name="Wakebe H."/>
            <person name="Hishigaki H."/>
            <person name="Watanabe T."/>
            <person name="Sugiyama A."/>
            <person name="Takemoto M."/>
            <person name="Kawakami B."/>
            <person name="Yamazaki M."/>
            <person name="Watanabe K."/>
            <person name="Kumagai A."/>
            <person name="Itakura S."/>
            <person name="Fukuzumi Y."/>
            <person name="Fujimori Y."/>
            <person name="Komiyama M."/>
            <person name="Tashiro H."/>
            <person name="Tanigami A."/>
            <person name="Fujiwara T."/>
            <person name="Ono T."/>
            <person name="Yamada K."/>
            <person name="Fujii Y."/>
            <person name="Ozaki K."/>
            <person name="Hirao M."/>
            <person name="Ohmori Y."/>
            <person name="Kawabata A."/>
            <person name="Hikiji T."/>
            <person name="Kobatake N."/>
            <person name="Inagaki H."/>
            <person name="Ikema Y."/>
            <person name="Okamoto S."/>
            <person name="Okitani R."/>
            <person name="Kawakami T."/>
            <person name="Noguchi S."/>
            <person name="Itoh T."/>
            <person name="Shigeta K."/>
            <person name="Senba T."/>
            <person name="Matsumura K."/>
            <person name="Nakajima Y."/>
            <person name="Mizuno T."/>
            <person name="Morinaga M."/>
            <person name="Sasaki M."/>
            <person name="Togashi T."/>
            <person name="Oyama M."/>
            <person name="Hata H."/>
            <person name="Watanabe M."/>
            <person name="Komatsu T."/>
            <person name="Mizushima-Sugano J."/>
            <person name="Satoh T."/>
            <person name="Shirai Y."/>
            <person name="Takahashi Y."/>
            <person name="Nakagawa K."/>
            <person name="Okumura K."/>
            <person name="Nagase T."/>
            <person name="Nomura N."/>
            <person name="Kikuchi H."/>
            <person name="Masuho Y."/>
            <person name="Yamashita R."/>
            <person name="Nakai K."/>
            <person name="Yada T."/>
            <person name="Nakamura Y."/>
            <person name="Ohara O."/>
            <person name="Isogai T."/>
            <person name="Sugano S."/>
        </authorList>
    </citation>
    <scope>NUCLEOTIDE SEQUENCE [LARGE SCALE MRNA]</scope>
    <source>
        <tissue>Corpus callosum</tissue>
    </source>
</reference>
<reference key="2">
    <citation type="journal article" date="2004" name="Nature">
        <title>The DNA sequence and biology of human chromosome 19.</title>
        <authorList>
            <person name="Grimwood J."/>
            <person name="Gordon L.A."/>
            <person name="Olsen A.S."/>
            <person name="Terry A."/>
            <person name="Schmutz J."/>
            <person name="Lamerdin J.E."/>
            <person name="Hellsten U."/>
            <person name="Goodstein D."/>
            <person name="Couronne O."/>
            <person name="Tran-Gyamfi M."/>
            <person name="Aerts A."/>
            <person name="Altherr M."/>
            <person name="Ashworth L."/>
            <person name="Bajorek E."/>
            <person name="Black S."/>
            <person name="Branscomb E."/>
            <person name="Caenepeel S."/>
            <person name="Carrano A.V."/>
            <person name="Caoile C."/>
            <person name="Chan Y.M."/>
            <person name="Christensen M."/>
            <person name="Cleland C.A."/>
            <person name="Copeland A."/>
            <person name="Dalin E."/>
            <person name="Dehal P."/>
            <person name="Denys M."/>
            <person name="Detter J.C."/>
            <person name="Escobar J."/>
            <person name="Flowers D."/>
            <person name="Fotopulos D."/>
            <person name="Garcia C."/>
            <person name="Georgescu A.M."/>
            <person name="Glavina T."/>
            <person name="Gomez M."/>
            <person name="Gonzales E."/>
            <person name="Groza M."/>
            <person name="Hammon N."/>
            <person name="Hawkins T."/>
            <person name="Haydu L."/>
            <person name="Ho I."/>
            <person name="Huang W."/>
            <person name="Israni S."/>
            <person name="Jett J."/>
            <person name="Kadner K."/>
            <person name="Kimball H."/>
            <person name="Kobayashi A."/>
            <person name="Larionov V."/>
            <person name="Leem S.-H."/>
            <person name="Lopez F."/>
            <person name="Lou Y."/>
            <person name="Lowry S."/>
            <person name="Malfatti S."/>
            <person name="Martinez D."/>
            <person name="McCready P.M."/>
            <person name="Medina C."/>
            <person name="Morgan J."/>
            <person name="Nelson K."/>
            <person name="Nolan M."/>
            <person name="Ovcharenko I."/>
            <person name="Pitluck S."/>
            <person name="Pollard M."/>
            <person name="Popkie A.P."/>
            <person name="Predki P."/>
            <person name="Quan G."/>
            <person name="Ramirez L."/>
            <person name="Rash S."/>
            <person name="Retterer J."/>
            <person name="Rodriguez A."/>
            <person name="Rogers S."/>
            <person name="Salamov A."/>
            <person name="Salazar A."/>
            <person name="She X."/>
            <person name="Smith D."/>
            <person name="Slezak T."/>
            <person name="Solovyev V."/>
            <person name="Thayer N."/>
            <person name="Tice H."/>
            <person name="Tsai M."/>
            <person name="Ustaszewska A."/>
            <person name="Vo N."/>
            <person name="Wagner M."/>
            <person name="Wheeler J."/>
            <person name="Wu K."/>
            <person name="Xie G."/>
            <person name="Yang J."/>
            <person name="Dubchak I."/>
            <person name="Furey T.S."/>
            <person name="DeJong P."/>
            <person name="Dickson M."/>
            <person name="Gordon D."/>
            <person name="Eichler E.E."/>
            <person name="Pennacchio L.A."/>
            <person name="Richardson P."/>
            <person name="Stubbs L."/>
            <person name="Rokhsar D.S."/>
            <person name="Myers R.M."/>
            <person name="Rubin E.M."/>
            <person name="Lucas S.M."/>
        </authorList>
    </citation>
    <scope>NUCLEOTIDE SEQUENCE [LARGE SCALE GENOMIC DNA]</scope>
</reference>
<reference key="3">
    <citation type="journal article" date="2004" name="Genome Res.">
        <title>The status, quality, and expansion of the NIH full-length cDNA project: the Mammalian Gene Collection (MGC).</title>
        <authorList>
            <consortium name="The MGC Project Team"/>
        </authorList>
    </citation>
    <scope>NUCLEOTIDE SEQUENCE [LARGE SCALE MRNA]</scope>
    <source>
        <tissue>Brain</tissue>
    </source>
</reference>
<reference key="4">
    <citation type="journal article" date="2006" name="Gene">
        <title>Identification and molecular modeling of a novel, plant-like, human purple acid phosphatase.</title>
        <authorList>
            <person name="Flanagan J.U."/>
            <person name="Cassady A.I."/>
            <person name="Schenk G."/>
            <person name="Guddat L.W."/>
            <person name="Hume D.A."/>
        </authorList>
    </citation>
    <scope>IDENTIFICATION</scope>
</reference>
<keyword id="KW-0325">Glycoprotein</keyword>
<keyword id="KW-0378">Hydrolase</keyword>
<keyword id="KW-0408">Iron</keyword>
<keyword id="KW-0479">Metal-binding</keyword>
<keyword id="KW-1267">Proteomics identification</keyword>
<keyword id="KW-1185">Reference proteome</keyword>
<keyword id="KW-0964">Secreted</keyword>
<keyword id="KW-0732">Signal</keyword>
<keyword id="KW-0862">Zinc</keyword>
<feature type="signal peptide" evidence="2">
    <location>
        <begin position="1"/>
        <end position="26"/>
    </location>
</feature>
<feature type="chain" id="PRO_0000316824" description="Acid phosphatase type 7">
    <location>
        <begin position="27"/>
        <end position="438"/>
    </location>
</feature>
<feature type="binding site" evidence="1">
    <location>
        <position position="141"/>
    </location>
    <ligand>
        <name>Fe cation</name>
        <dbReference type="ChEBI" id="CHEBI:24875"/>
    </ligand>
</feature>
<feature type="binding site" evidence="1">
    <location>
        <position position="170"/>
    </location>
    <ligand>
        <name>Fe cation</name>
        <dbReference type="ChEBI" id="CHEBI:24875"/>
    </ligand>
</feature>
<feature type="binding site" evidence="1">
    <location>
        <position position="170"/>
    </location>
    <ligand>
        <name>Zn(2+)</name>
        <dbReference type="ChEBI" id="CHEBI:29105"/>
    </ligand>
</feature>
<feature type="binding site" evidence="1">
    <location>
        <position position="173"/>
    </location>
    <ligand>
        <name>Fe cation</name>
        <dbReference type="ChEBI" id="CHEBI:24875"/>
    </ligand>
</feature>
<feature type="binding site" evidence="1">
    <location>
        <position position="205"/>
    </location>
    <ligand>
        <name>Zn(2+)</name>
        <dbReference type="ChEBI" id="CHEBI:29105"/>
    </ligand>
</feature>
<feature type="binding site" evidence="1">
    <location>
        <position position="286"/>
    </location>
    <ligand>
        <name>Zn(2+)</name>
        <dbReference type="ChEBI" id="CHEBI:29105"/>
    </ligand>
</feature>
<feature type="binding site" evidence="1">
    <location>
        <position position="333"/>
    </location>
    <ligand>
        <name>Zn(2+)</name>
        <dbReference type="ChEBI" id="CHEBI:29105"/>
    </ligand>
</feature>
<feature type="binding site" evidence="1">
    <location>
        <position position="335"/>
    </location>
    <ligand>
        <name>Fe cation</name>
        <dbReference type="ChEBI" id="CHEBI:24875"/>
    </ligand>
</feature>
<feature type="glycosylation site" description="N-linked (GlcNAc...) asparagine" evidence="2">
    <location>
        <position position="211"/>
    </location>
</feature>
<feature type="glycosylation site" description="N-linked (GlcNAc...) asparagine" evidence="2">
    <location>
        <position position="350"/>
    </location>
</feature>
<feature type="glycosylation site" description="N-linked (GlcNAc...) asparagine" evidence="2">
    <location>
        <position position="404"/>
    </location>
</feature>
<feature type="sequence conflict" description="In Ref. 1; BAD18425." evidence="4" ref="1">
    <original>I</original>
    <variation>T</variation>
    <location>
        <position position="408"/>
    </location>
</feature>
<dbReference type="EC" id="3.1.3.2"/>
<dbReference type="EMBL" id="AK131245">
    <property type="protein sequence ID" value="BAD18425.1"/>
    <property type="molecule type" value="mRNA"/>
</dbReference>
<dbReference type="EMBL" id="AC011443">
    <property type="status" value="NOT_ANNOTATED_CDS"/>
    <property type="molecule type" value="Genomic_DNA"/>
</dbReference>
<dbReference type="EMBL" id="BC136721">
    <property type="protein sequence ID" value="AAI36722.1"/>
    <property type="molecule type" value="mRNA"/>
</dbReference>
<dbReference type="EMBL" id="BC136722">
    <property type="protein sequence ID" value="AAI36723.1"/>
    <property type="molecule type" value="mRNA"/>
</dbReference>
<dbReference type="CCDS" id="CCDS33018.1"/>
<dbReference type="RefSeq" id="NP_001004318.2">
    <property type="nucleotide sequence ID" value="NM_001004318.3"/>
</dbReference>
<dbReference type="RefSeq" id="XP_011525268.1">
    <property type="nucleotide sequence ID" value="XM_011526966.4"/>
</dbReference>
<dbReference type="RefSeq" id="XP_016882296.1">
    <property type="nucleotide sequence ID" value="XM_017026807.3"/>
</dbReference>
<dbReference type="RefSeq" id="XP_054176976.1">
    <property type="nucleotide sequence ID" value="XM_054321001.1"/>
</dbReference>
<dbReference type="RefSeq" id="XP_054176977.1">
    <property type="nucleotide sequence ID" value="XM_054321002.1"/>
</dbReference>
<dbReference type="RefSeq" id="XP_054176978.1">
    <property type="nucleotide sequence ID" value="XM_054321003.1"/>
</dbReference>
<dbReference type="SMR" id="Q6ZNF0"/>
<dbReference type="BioGRID" id="133739">
    <property type="interactions" value="51"/>
</dbReference>
<dbReference type="FunCoup" id="Q6ZNF0">
    <property type="interactions" value="108"/>
</dbReference>
<dbReference type="IntAct" id="Q6ZNF0">
    <property type="interactions" value="20"/>
</dbReference>
<dbReference type="STRING" id="9606.ENSP00000327557"/>
<dbReference type="DEPOD" id="ACP7"/>
<dbReference type="GlyCosmos" id="Q6ZNF0">
    <property type="glycosylation" value="3 sites, No reported glycans"/>
</dbReference>
<dbReference type="GlyGen" id="Q6ZNF0">
    <property type="glycosylation" value="3 sites"/>
</dbReference>
<dbReference type="iPTMnet" id="Q6ZNF0"/>
<dbReference type="PhosphoSitePlus" id="Q6ZNF0"/>
<dbReference type="BioMuta" id="ACP7"/>
<dbReference type="DMDM" id="269849643"/>
<dbReference type="jPOST" id="Q6ZNF0"/>
<dbReference type="MassIVE" id="Q6ZNF0"/>
<dbReference type="PaxDb" id="9606-ENSP00000327557"/>
<dbReference type="PeptideAtlas" id="Q6ZNF0"/>
<dbReference type="ProteomicsDB" id="68020"/>
<dbReference type="Antibodypedia" id="48007">
    <property type="antibodies" value="9 antibodies from 5 providers"/>
</dbReference>
<dbReference type="DNASU" id="390928"/>
<dbReference type="Ensembl" id="ENST00000331256.10">
    <property type="protein sequence ID" value="ENSP00000327557.4"/>
    <property type="gene ID" value="ENSG00000183760.11"/>
</dbReference>
<dbReference type="GeneID" id="390928"/>
<dbReference type="KEGG" id="hsa:390928"/>
<dbReference type="MANE-Select" id="ENST00000331256.10">
    <property type="protein sequence ID" value="ENSP00000327557.4"/>
    <property type="RefSeq nucleotide sequence ID" value="NM_001004318.3"/>
    <property type="RefSeq protein sequence ID" value="NP_001004318.2"/>
</dbReference>
<dbReference type="UCSC" id="uc002oki.4">
    <property type="organism name" value="human"/>
</dbReference>
<dbReference type="AGR" id="HGNC:33781"/>
<dbReference type="CTD" id="390928"/>
<dbReference type="DisGeNET" id="390928"/>
<dbReference type="GeneCards" id="ACP7"/>
<dbReference type="HGNC" id="HGNC:33781">
    <property type="gene designation" value="ACP7"/>
</dbReference>
<dbReference type="HPA" id="ENSG00000183760">
    <property type="expression patterns" value="Tissue enhanced (brain, skin)"/>
</dbReference>
<dbReference type="MIM" id="610490">
    <property type="type" value="gene"/>
</dbReference>
<dbReference type="neXtProt" id="NX_Q6ZNF0"/>
<dbReference type="OpenTargets" id="ENSG00000183760"/>
<dbReference type="VEuPathDB" id="HostDB:ENSG00000183760"/>
<dbReference type="eggNOG" id="KOG1378">
    <property type="taxonomic scope" value="Eukaryota"/>
</dbReference>
<dbReference type="GeneTree" id="ENSGT00390000015485"/>
<dbReference type="InParanoid" id="Q6ZNF0"/>
<dbReference type="OMA" id="FTEFMHR"/>
<dbReference type="OrthoDB" id="45007at2759"/>
<dbReference type="PAN-GO" id="Q6ZNF0">
    <property type="GO annotations" value="0 GO annotations based on evolutionary models"/>
</dbReference>
<dbReference type="PhylomeDB" id="Q6ZNF0"/>
<dbReference type="PathwayCommons" id="Q6ZNF0"/>
<dbReference type="SignaLink" id="Q6ZNF0"/>
<dbReference type="BioGRID-ORCS" id="390928">
    <property type="hits" value="14 hits in 1093 CRISPR screens"/>
</dbReference>
<dbReference type="ChiTaRS" id="ACP7">
    <property type="organism name" value="human"/>
</dbReference>
<dbReference type="GenomeRNAi" id="390928"/>
<dbReference type="Pharos" id="Q6ZNF0">
    <property type="development level" value="Tdark"/>
</dbReference>
<dbReference type="PRO" id="PR:Q6ZNF0"/>
<dbReference type="Proteomes" id="UP000005640">
    <property type="component" value="Chromosome 19"/>
</dbReference>
<dbReference type="RNAct" id="Q6ZNF0">
    <property type="molecule type" value="protein"/>
</dbReference>
<dbReference type="Bgee" id="ENSG00000183760">
    <property type="expression patterns" value="Expressed in cerebellum and 56 other cell types or tissues"/>
</dbReference>
<dbReference type="ExpressionAtlas" id="Q6ZNF0">
    <property type="expression patterns" value="baseline and differential"/>
</dbReference>
<dbReference type="GO" id="GO:0005576">
    <property type="term" value="C:extracellular region"/>
    <property type="evidence" value="ECO:0007669"/>
    <property type="project" value="UniProtKB-SubCell"/>
</dbReference>
<dbReference type="GO" id="GO:0003993">
    <property type="term" value="F:acid phosphatase activity"/>
    <property type="evidence" value="ECO:0007669"/>
    <property type="project" value="UniProtKB-EC"/>
</dbReference>
<dbReference type="GO" id="GO:0046872">
    <property type="term" value="F:metal ion binding"/>
    <property type="evidence" value="ECO:0007669"/>
    <property type="project" value="UniProtKB-KW"/>
</dbReference>
<dbReference type="CDD" id="cd00839">
    <property type="entry name" value="MPP_PAPs"/>
    <property type="match status" value="1"/>
</dbReference>
<dbReference type="Gene3D" id="3.60.21.10">
    <property type="match status" value="1"/>
</dbReference>
<dbReference type="Gene3D" id="2.60.40.380">
    <property type="entry name" value="Purple acid phosphatase-like, N-terminal"/>
    <property type="match status" value="1"/>
</dbReference>
<dbReference type="InterPro" id="IPR004843">
    <property type="entry name" value="Calcineurin-like_PHP_ApaH"/>
</dbReference>
<dbReference type="InterPro" id="IPR029052">
    <property type="entry name" value="Metallo-depent_PP-like"/>
</dbReference>
<dbReference type="InterPro" id="IPR041792">
    <property type="entry name" value="MPP_PAP"/>
</dbReference>
<dbReference type="InterPro" id="IPR008963">
    <property type="entry name" value="Purple_acid_Pase-like_N"/>
</dbReference>
<dbReference type="InterPro" id="IPR015914">
    <property type="entry name" value="Purple_acid_Pase_N"/>
</dbReference>
<dbReference type="InterPro" id="IPR025733">
    <property type="entry name" value="Purple_acid_PPase_C_dom"/>
</dbReference>
<dbReference type="PANTHER" id="PTHR45867:SF3">
    <property type="entry name" value="ACID PHOSPHATASE TYPE 7"/>
    <property type="match status" value="1"/>
</dbReference>
<dbReference type="PANTHER" id="PTHR45867">
    <property type="entry name" value="PURPLE ACID PHOSPHATASE"/>
    <property type="match status" value="1"/>
</dbReference>
<dbReference type="Pfam" id="PF00149">
    <property type="entry name" value="Metallophos"/>
    <property type="match status" value="1"/>
</dbReference>
<dbReference type="Pfam" id="PF14008">
    <property type="entry name" value="Metallophos_C"/>
    <property type="match status" value="1"/>
</dbReference>
<dbReference type="Pfam" id="PF16656">
    <property type="entry name" value="Pur_ac_phosph_N"/>
    <property type="match status" value="1"/>
</dbReference>
<dbReference type="SUPFAM" id="SSF56300">
    <property type="entry name" value="Metallo-dependent phosphatases"/>
    <property type="match status" value="1"/>
</dbReference>
<dbReference type="SUPFAM" id="SSF49363">
    <property type="entry name" value="Purple acid phosphatase, N-terminal domain"/>
    <property type="match status" value="1"/>
</dbReference>
<sequence length="438" mass="50480">MHPLPGYWSCYCLLLLFSLGVQGSLGAPSAAPEQVHLSYPGEPGSMTVTWTTWVPTRSEVQFGLQPSGPLPLRAQGTFVPFVDGGILRRKLYIHRVTLRKLLPGVQYVYRCGSAQGWSRRFRFRALKNGAHWSPRLAVFGDLGADNPKAVPRLRRDTQQGMYDAVLHVGDFAYNLDQDNARVGDRFMRLIEPVAASLPYMTCPGNHEERYNFSNYKARFSMPGDNEGLWYSWDLGPAHIISFSTEVYFFLHYGRHLVQRQFRWLESDLQKANKNRAARPWIITMGHRPMYCSNADLDDCTRHESKVRKGLQGKLYGLEDLFYKYGVDLQLWAHEHSYERLWPIYNYQVFNGSREMPYTNPRGPVHIITGSAGCEERLTPFAVFPRPWSAVRVKEYGYTRLHILNGTHIHIQQVSDDQDGKIVDDVWVVRPLFGRRMYL</sequence>
<comment type="catalytic activity">
    <reaction>
        <text>a phosphate monoester + H2O = an alcohol + phosphate</text>
        <dbReference type="Rhea" id="RHEA:15017"/>
        <dbReference type="ChEBI" id="CHEBI:15377"/>
        <dbReference type="ChEBI" id="CHEBI:30879"/>
        <dbReference type="ChEBI" id="CHEBI:43474"/>
        <dbReference type="ChEBI" id="CHEBI:67140"/>
        <dbReference type="EC" id="3.1.3.2"/>
    </reaction>
</comment>
<comment type="cofactor">
    <cofactor evidence="1">
        <name>Fe cation</name>
        <dbReference type="ChEBI" id="CHEBI:24875"/>
    </cofactor>
    <text evidence="1">Binds 1 Fe cation per subunit.</text>
</comment>
<comment type="cofactor">
    <cofactor evidence="1">
        <name>Zn(2+)</name>
        <dbReference type="ChEBI" id="CHEBI:29105"/>
    </cofactor>
    <text evidence="1">Binds 1 zinc ion per subunit.</text>
</comment>
<comment type="subcellular location">
    <subcellularLocation>
        <location evidence="4">Secreted</location>
    </subcellularLocation>
</comment>
<comment type="similarity">
    <text evidence="4">Belongs to the metallophosphoesterase superfamily. Purple acid phosphatase family.</text>
</comment>